<name>TARF_BACSH</name>
<comment type="function">
    <text evidence="1">Catalyzes the addition of further 2-8 glycerol phosphate units from CDP-glycerol to the single glycerol phosphate unit bound to the prenolpyrophosphate-linked disaccharide. The function in the cell is unknown since the product is not part of the poly(ribitol phosphate) teichoic acid found in the cell walls.</text>
</comment>
<comment type="catalytic activity">
    <reaction evidence="1">
        <text>4-O-[(2R)-glycerylphospho]-N-acetyl-beta-D-mannosaminyl-(1-&gt;4)-N-acetyl-alpha-D-glucosaminyl di-trans,octa-cis-undecaprenyl diphosphate + n CDP-glycerol = 4-O-{[(2R)-1-glycerylphospho](n)-(2R)-1-glycerylphospho}-N-acetyl-beta-D-mannosaminyl-(1-&gt;4)-N-acetyl-alpha-D-glucosaminyl undecaprenyl diphosphate + n CMP + n H(+)</text>
        <dbReference type="Rhea" id="RHEA:13565"/>
        <dbReference type="Rhea" id="RHEA-COMP:12597"/>
        <dbReference type="ChEBI" id="CHEBI:15378"/>
        <dbReference type="ChEBI" id="CHEBI:58311"/>
        <dbReference type="ChEBI" id="CHEBI:60377"/>
        <dbReference type="ChEBI" id="CHEBI:132211"/>
        <dbReference type="ChEBI" id="CHEBI:132224"/>
        <dbReference type="EC" id="2.7.8.12"/>
    </reaction>
</comment>
<comment type="subcellular location">
    <subcellularLocation>
        <location evidence="2">Cell membrane</location>
        <topology evidence="2">Peripheral membrane protein</topology>
    </subcellularLocation>
</comment>
<comment type="induction">
    <text evidence="1">The gene is not expressed under normal growth conditions.</text>
</comment>
<comment type="disruption phenotype">
    <text evidence="1">No effect.</text>
</comment>
<comment type="similarity">
    <text evidence="2">Belongs to the CDP-glycerol glycerophosphotransferase family.</text>
</comment>
<protein>
    <recommendedName>
        <fullName evidence="2">Teichoic acid poly(glycerol phosphate) polymerase</fullName>
        <ecNumber evidence="1">2.7.8.12</ecNumber>
    </recommendedName>
</protein>
<reference key="1">
    <citation type="journal article" date="2002" name="Microbiology">
        <title>Comparison of ribitol and glycerol teichoic acid genes in Bacillus subtilis W23 and 168: identical function, similar divergent organization, but different regulation.</title>
        <authorList>
            <person name="Lazarevic V."/>
            <person name="Abellan F.-X."/>
            <person name="Beggah Moeller S."/>
            <person name="Karamata D."/>
            <person name="Maueel C."/>
        </authorList>
    </citation>
    <scope>NUCLEOTIDE SEQUENCE [GENOMIC DNA]</scope>
    <source>
        <strain>ATCC 23059 / NRRL B-14472 / W23</strain>
    </source>
</reference>
<reference key="2">
    <citation type="submission" date="2006-04" db="EMBL/GenBank/DDBJ databases">
        <title>Minor teichoic acid of Bacillus subtilis W23.</title>
        <authorList>
            <person name="Soldo B."/>
            <person name="Freymond P.P."/>
            <person name="Karamata D."/>
            <person name="Lazarevic V."/>
        </authorList>
    </citation>
    <scope>NUCLEOTIDE SEQUENCE [GENOMIC DNA]</scope>
    <source>
        <strain>ATCC 23059 / NRRL B-14472 / W23</strain>
    </source>
</reference>
<reference key="3">
    <citation type="journal article" date="2011" name="Microbiology">
        <title>The genome sequence of Bacillus subtilis subsp. spizizenii W23: insights into speciation within the B. subtilis complex and into the history of B. subtilis genetics.</title>
        <authorList>
            <person name="Zeigler D.R."/>
        </authorList>
    </citation>
    <scope>NUCLEOTIDE SEQUENCE [LARGE SCALE GENOMIC DNA]</scope>
    <source>
        <strain>ATCC 23059 / NRRL B-14472 / W23</strain>
    </source>
</reference>
<reference key="4">
    <citation type="journal article" date="2010" name="Chem. Biol.">
        <title>Staphylococcus aureus and Bacillus subtilis W23 make polyribitol wall teichoic acids using different enzymatic pathways.</title>
        <authorList>
            <person name="Brown S."/>
            <person name="Meredith T."/>
            <person name="Swoboda J."/>
            <person name="Walker S."/>
        </authorList>
    </citation>
    <scope>FUNCTION</scope>
    <scope>CATALYTIC ACTIVITY</scope>
    <scope>DISRUPTION PHENOTYPE</scope>
    <scope>INDUCTION</scope>
    <source>
        <strain>ATCC 23059 / NRRL B-14472 / W23</strain>
    </source>
</reference>
<dbReference type="EC" id="2.7.8.12" evidence="1"/>
<dbReference type="EMBL" id="AJ313428">
    <property type="protein sequence ID" value="CAC86113.1"/>
    <property type="molecule type" value="Genomic_DNA"/>
</dbReference>
<dbReference type="EMBL" id="AM260209">
    <property type="protein sequence ID" value="CAJ97400.1"/>
    <property type="molecule type" value="Genomic_DNA"/>
</dbReference>
<dbReference type="EMBL" id="CP002183">
    <property type="protein sequence ID" value="ADM39544.1"/>
    <property type="molecule type" value="Genomic_DNA"/>
</dbReference>
<dbReference type="SMR" id="Q8RKI5"/>
<dbReference type="KEGG" id="bss:BSUW23_17545"/>
<dbReference type="HOGENOM" id="CLU_029598_1_1_9"/>
<dbReference type="BioCyc" id="MetaCyc:MONOMER-19963"/>
<dbReference type="Proteomes" id="UP000002233">
    <property type="component" value="Chromosome"/>
</dbReference>
<dbReference type="GO" id="GO:0005886">
    <property type="term" value="C:plasma membrane"/>
    <property type="evidence" value="ECO:0007669"/>
    <property type="project" value="UniProtKB-SubCell"/>
</dbReference>
<dbReference type="GO" id="GO:0047355">
    <property type="term" value="F:CDP-glycerol glycerophosphotransferase activity"/>
    <property type="evidence" value="ECO:0007669"/>
    <property type="project" value="UniProtKB-EC"/>
</dbReference>
<dbReference type="GO" id="GO:0019350">
    <property type="term" value="P:teichoic acid biosynthetic process"/>
    <property type="evidence" value="ECO:0007669"/>
    <property type="project" value="UniProtKB-KW"/>
</dbReference>
<dbReference type="Gene3D" id="3.40.50.11820">
    <property type="match status" value="1"/>
</dbReference>
<dbReference type="Gene3D" id="3.40.50.12580">
    <property type="match status" value="1"/>
</dbReference>
<dbReference type="InterPro" id="IPR007554">
    <property type="entry name" value="Glycerophosphate_synth"/>
</dbReference>
<dbReference type="InterPro" id="IPR043148">
    <property type="entry name" value="TagF_C"/>
</dbReference>
<dbReference type="InterPro" id="IPR043149">
    <property type="entry name" value="TagF_N"/>
</dbReference>
<dbReference type="InterPro" id="IPR051612">
    <property type="entry name" value="Teichoic_Acid_Biosynth"/>
</dbReference>
<dbReference type="PANTHER" id="PTHR37316">
    <property type="entry name" value="TEICHOIC ACID GLYCEROL-PHOSPHATE PRIMASE"/>
    <property type="match status" value="1"/>
</dbReference>
<dbReference type="PANTHER" id="PTHR37316:SF3">
    <property type="entry name" value="TEICHOIC ACID GLYCEROL-PHOSPHATE TRANSFERASE"/>
    <property type="match status" value="1"/>
</dbReference>
<dbReference type="Pfam" id="PF04464">
    <property type="entry name" value="Glyphos_transf"/>
    <property type="match status" value="1"/>
</dbReference>
<dbReference type="SUPFAM" id="SSF53756">
    <property type="entry name" value="UDP-Glycosyltransferase/glycogen phosphorylase"/>
    <property type="match status" value="1"/>
</dbReference>
<proteinExistence type="evidence at protein level"/>
<keyword id="KW-1003">Cell membrane</keyword>
<keyword id="KW-0472">Membrane</keyword>
<keyword id="KW-0777">Teichoic acid biosynthesis</keyword>
<keyword id="KW-0808">Transferase</keyword>
<feature type="chain" id="PRO_0000208449" description="Teichoic acid poly(glycerol phosphate) polymerase">
    <location>
        <begin position="1"/>
        <end position="394"/>
    </location>
</feature>
<organism>
    <name type="scientific">Bacillus spizizenii (strain ATCC 23059 / NRRL B-14472 / W23)</name>
    <name type="common">Bacillus subtilis subsp. spizizenii</name>
    <dbReference type="NCBI Taxonomy" id="655816"/>
    <lineage>
        <taxon>Bacteria</taxon>
        <taxon>Bacillati</taxon>
        <taxon>Bacillota</taxon>
        <taxon>Bacilli</taxon>
        <taxon>Bacillales</taxon>
        <taxon>Bacillaceae</taxon>
        <taxon>Bacillus</taxon>
    </lineage>
</organism>
<sequence>MKSKILMKYRSLLVRIYSIVFRIIGLLPRNEKLIIFESYSGKQFSCNPRAIFEYLEENKDKYDYQLIWSIDKRNKDLFDNSDVNYLRRFSLKWLWYMATAKYWVTNSRLPLWIPKPRNTTYVQTWHGTPLKKLANDMDEVHMPGTTTEQYKRNFLKEASKWDYLISPNAYSTEIFRSAFQFKKTFIESGYPRNDFLHKKNRNEEMLKIKERLGINKDKKIILYAPTWRDNSFYAKGKYKFNMVLDLESLKNQLCNEYILILRMHYLVSENINLTEYKEFAYDFSDHNDIRELYLISDILITDYSSVFFDFAGLKRPILFYVPDIEFYRDNLRGFYYDFEKCAPGPLLKTTEKVIEAIHKTKNYKQDENITSFYDQFCYLEKGDSSKKVVEELLG</sequence>
<accession>Q8RKI5</accession>
<accession>B7ZDL1</accession>
<accession>E0U4X3</accession>
<gene>
    <name type="primary">tarF</name>
    <name type="ordered locus">BSUW23_17545</name>
</gene>
<evidence type="ECO:0000269" key="1">
    <source>
    </source>
</evidence>
<evidence type="ECO:0000305" key="2"/>